<keyword id="KW-0007">Acetylation</keyword>
<keyword id="KW-0067">ATP-binding</keyword>
<keyword id="KW-0963">Cytoplasm</keyword>
<keyword id="KW-0206">Cytoskeleton</keyword>
<keyword id="KW-0378">Hydrolase</keyword>
<keyword id="KW-0488">Methylation</keyword>
<keyword id="KW-0514">Muscle protein</keyword>
<keyword id="KW-0547">Nucleotide-binding</keyword>
<keyword id="KW-0558">Oxidation</keyword>
<keyword id="KW-1185">Reference proteome</keyword>
<organism>
    <name type="scientific">Takifugu rubripes</name>
    <name type="common">Japanese pufferfish</name>
    <name type="synonym">Fugu rubripes</name>
    <dbReference type="NCBI Taxonomy" id="31033"/>
    <lineage>
        <taxon>Eukaryota</taxon>
        <taxon>Metazoa</taxon>
        <taxon>Chordata</taxon>
        <taxon>Craniata</taxon>
        <taxon>Vertebrata</taxon>
        <taxon>Euteleostomi</taxon>
        <taxon>Actinopterygii</taxon>
        <taxon>Neopterygii</taxon>
        <taxon>Teleostei</taxon>
        <taxon>Neoteleostei</taxon>
        <taxon>Acanthomorphata</taxon>
        <taxon>Eupercaria</taxon>
        <taxon>Tetraodontiformes</taxon>
        <taxon>Tetradontoidea</taxon>
        <taxon>Tetraodontidae</taxon>
        <taxon>Takifugu</taxon>
    </lineage>
</organism>
<protein>
    <recommendedName>
        <fullName>Actin, alpha cardiac muscle</fullName>
        <ecNumber evidence="6">3.6.4.-</ecNumber>
    </recommendedName>
    <alternativeName>
        <fullName>Alpha-cardiac actin</fullName>
    </alternativeName>
    <component>
        <recommendedName>
            <fullName>Actin, alpha cardiac muscle, intermediate form</fullName>
        </recommendedName>
    </component>
</protein>
<dbReference type="EC" id="3.6.4.-" evidence="6"/>
<dbReference type="EMBL" id="U38959">
    <property type="protein sequence ID" value="AAC59894.1"/>
    <property type="molecule type" value="Genomic_DNA"/>
</dbReference>
<dbReference type="EMBL" id="U38960">
    <property type="protein sequence ID" value="AAC59895.1"/>
    <property type="molecule type" value="Genomic_DNA"/>
</dbReference>
<dbReference type="EMBL" id="U38961">
    <property type="protein sequence ID" value="AAC59896.1"/>
    <property type="molecule type" value="Genomic_DNA"/>
</dbReference>
<dbReference type="PIR" id="S71120">
    <property type="entry name" value="S71120"/>
</dbReference>
<dbReference type="RefSeq" id="XP_003962484.1">
    <property type="nucleotide sequence ID" value="XM_003962435.3"/>
</dbReference>
<dbReference type="RefSeq" id="XP_003971792.1">
    <property type="nucleotide sequence ID" value="XM_003971743.3"/>
</dbReference>
<dbReference type="RefSeq" id="XP_003978055.1">
    <property type="nucleotide sequence ID" value="XM_003978006.3"/>
</dbReference>
<dbReference type="SMR" id="P53480"/>
<dbReference type="FunCoup" id="P53480">
    <property type="interactions" value="496"/>
</dbReference>
<dbReference type="STRING" id="31033.ENSTRUP00000046146"/>
<dbReference type="Ensembl" id="ENSTRUT00000036073.3">
    <property type="protein sequence ID" value="ENSTRUP00000035943.1"/>
    <property type="gene ID" value="ENSTRUG00000014049.3"/>
</dbReference>
<dbReference type="Ensembl" id="ENSTRUT00000046301.3">
    <property type="protein sequence ID" value="ENSTRUP00000046146.1"/>
    <property type="gene ID" value="ENSTRUG00000018009.3"/>
</dbReference>
<dbReference type="Ensembl" id="ENSTRUT00000061560.1">
    <property type="protein sequence ID" value="ENSTRUP00000064007.1"/>
    <property type="gene ID" value="ENSTRUG00000030016.1"/>
</dbReference>
<dbReference type="GeneID" id="101062076"/>
<dbReference type="GeneID" id="101072885"/>
<dbReference type="GeneID" id="101077200"/>
<dbReference type="KEGG" id="tru:101062076"/>
<dbReference type="KEGG" id="tru:101072885"/>
<dbReference type="KEGG" id="tru:101077200"/>
<dbReference type="CTD" id="408256"/>
<dbReference type="eggNOG" id="KOG0676">
    <property type="taxonomic scope" value="Eukaryota"/>
</dbReference>
<dbReference type="GeneTree" id="ENSGT00940000156048"/>
<dbReference type="GeneTree" id="ENSGT00940000169390"/>
<dbReference type="HOGENOM" id="CLU_027965_0_2_1"/>
<dbReference type="InParanoid" id="P53480"/>
<dbReference type="OMA" id="FTTSAEF"/>
<dbReference type="OrthoDB" id="6953074at2759"/>
<dbReference type="TreeFam" id="TF354237"/>
<dbReference type="Proteomes" id="UP000005226">
    <property type="component" value="Chromosome 16"/>
</dbReference>
<dbReference type="Proteomes" id="UP000005226">
    <property type="component" value="Chromosome 17"/>
</dbReference>
<dbReference type="Proteomes" id="UP000005226">
    <property type="component" value="Chromosome 2"/>
</dbReference>
<dbReference type="GO" id="GO:0005737">
    <property type="term" value="C:cytoplasm"/>
    <property type="evidence" value="ECO:0007669"/>
    <property type="project" value="UniProtKB-KW"/>
</dbReference>
<dbReference type="GO" id="GO:0005856">
    <property type="term" value="C:cytoskeleton"/>
    <property type="evidence" value="ECO:0007669"/>
    <property type="project" value="UniProtKB-SubCell"/>
</dbReference>
<dbReference type="GO" id="GO:0005524">
    <property type="term" value="F:ATP binding"/>
    <property type="evidence" value="ECO:0007669"/>
    <property type="project" value="UniProtKB-KW"/>
</dbReference>
<dbReference type="GO" id="GO:0016787">
    <property type="term" value="F:hydrolase activity"/>
    <property type="evidence" value="ECO:0007669"/>
    <property type="project" value="UniProtKB-KW"/>
</dbReference>
<dbReference type="CDD" id="cd10224">
    <property type="entry name" value="ASKHA_NBD_actin"/>
    <property type="match status" value="1"/>
</dbReference>
<dbReference type="FunFam" id="2.30.36.70:FF:000001">
    <property type="entry name" value="Actin, alpha skeletal muscle"/>
    <property type="match status" value="1"/>
</dbReference>
<dbReference type="FunFam" id="3.30.420.40:FF:000131">
    <property type="entry name" value="Actin, alpha skeletal muscle"/>
    <property type="match status" value="1"/>
</dbReference>
<dbReference type="FunFam" id="3.30.420.40:FF:000291">
    <property type="entry name" value="Actin, alpha skeletal muscle"/>
    <property type="match status" value="1"/>
</dbReference>
<dbReference type="FunFam" id="3.90.640.10:FF:000047">
    <property type="entry name" value="Actin, alpha skeletal muscle"/>
    <property type="match status" value="1"/>
</dbReference>
<dbReference type="FunFam" id="3.30.420.40:FF:000058">
    <property type="entry name" value="Putative actin-related protein 5"/>
    <property type="match status" value="1"/>
</dbReference>
<dbReference type="Gene3D" id="3.30.420.40">
    <property type="match status" value="2"/>
</dbReference>
<dbReference type="Gene3D" id="3.90.640.10">
    <property type="entry name" value="Actin, Chain A, domain 4"/>
    <property type="match status" value="1"/>
</dbReference>
<dbReference type="InterPro" id="IPR004000">
    <property type="entry name" value="Actin"/>
</dbReference>
<dbReference type="InterPro" id="IPR020902">
    <property type="entry name" value="Actin/actin-like_CS"/>
</dbReference>
<dbReference type="InterPro" id="IPR004001">
    <property type="entry name" value="Actin_CS"/>
</dbReference>
<dbReference type="InterPro" id="IPR043129">
    <property type="entry name" value="ATPase_NBD"/>
</dbReference>
<dbReference type="PANTHER" id="PTHR11937">
    <property type="entry name" value="ACTIN"/>
    <property type="match status" value="1"/>
</dbReference>
<dbReference type="Pfam" id="PF00022">
    <property type="entry name" value="Actin"/>
    <property type="match status" value="1"/>
</dbReference>
<dbReference type="PRINTS" id="PR00190">
    <property type="entry name" value="ACTIN"/>
</dbReference>
<dbReference type="SMART" id="SM00268">
    <property type="entry name" value="ACTIN"/>
    <property type="match status" value="1"/>
</dbReference>
<dbReference type="SUPFAM" id="SSF53067">
    <property type="entry name" value="Actin-like ATPase domain"/>
    <property type="match status" value="2"/>
</dbReference>
<dbReference type="PROSITE" id="PS00406">
    <property type="entry name" value="ACTINS_1"/>
    <property type="match status" value="1"/>
</dbReference>
<dbReference type="PROSITE" id="PS00432">
    <property type="entry name" value="ACTINS_2"/>
    <property type="match status" value="1"/>
</dbReference>
<dbReference type="PROSITE" id="PS01132">
    <property type="entry name" value="ACTINS_ACT_LIKE"/>
    <property type="match status" value="1"/>
</dbReference>
<comment type="function">
    <text>Actins are highly conserved proteins that are involved in various types of cell motility and are ubiquitously expressed in all eukaryotic cells.</text>
</comment>
<comment type="catalytic activity">
    <reaction evidence="6">
        <text>ATP + H2O = ADP + phosphate + H(+)</text>
        <dbReference type="Rhea" id="RHEA:13065"/>
        <dbReference type="ChEBI" id="CHEBI:15377"/>
        <dbReference type="ChEBI" id="CHEBI:15378"/>
        <dbReference type="ChEBI" id="CHEBI:30616"/>
        <dbReference type="ChEBI" id="CHEBI:43474"/>
        <dbReference type="ChEBI" id="CHEBI:456216"/>
    </reaction>
</comment>
<comment type="subunit">
    <text>Polymerization of globular actin (G-actin) leads to a structural filament (F-actin) in the form of a two-stranded helix. Each actin can bind to 4 others.</text>
</comment>
<comment type="subcellular location">
    <subcellularLocation>
        <location>Cytoplasm</location>
        <location>Cytoskeleton</location>
    </subcellularLocation>
</comment>
<comment type="tissue specificity">
    <text evidence="7">Predominantly expressed in heart. Lower levels in skeletal muscle and skin.</text>
</comment>
<comment type="PTM">
    <molecule>Actin, alpha cardiac muscle, intermediate form</molecule>
    <text evidence="4">N-terminal cleavage of acetylated cysteine of intermediate muscle actin by ACTMAP.</text>
</comment>
<comment type="PTM">
    <text evidence="4">Oxidation of Met-46 and Met-49 by MICALs (MICAL1, MICAL2 or MICAL3) to form methionine sulfoxide promotes actin filament depolymerization. MICAL1 and MICAL2 produce the (R)-S-oxide form. The (R)-S-oxide form is reverted by MSRB1 and MSRB2, which promotes actin repolymerization.</text>
</comment>
<comment type="PTM">
    <text evidence="3">Monomethylation at Lys-86 (K86me1) regulates actin-myosin interaction and actomyosin-dependent processes. Demethylation by ALKBH4 is required for maintaining actomyosin dynamics supporting normal cleavage furrow ingression during cytokinesis and cell migration.</text>
</comment>
<comment type="miscellaneous">
    <text>In vertebrates 3 main groups of actin isoforms, alpha, beta and gamma have been identified. The alpha actins are found in muscle tissues and are a major constituent of the contractile apparatus. The beta and gamma actins coexist in most cell types as components of the cytoskeleton and as mediators of internal cell motility.</text>
</comment>
<comment type="miscellaneous">
    <text>There are three genes coding for cardiac actin in Fugu.</text>
</comment>
<comment type="similarity">
    <text evidence="8">Belongs to the actin family.</text>
</comment>
<evidence type="ECO:0000250" key="1">
    <source>
        <dbReference type="UniProtKB" id="P62737"/>
    </source>
</evidence>
<evidence type="ECO:0000250" key="2">
    <source>
        <dbReference type="UniProtKB" id="P62739"/>
    </source>
</evidence>
<evidence type="ECO:0000250" key="3">
    <source>
        <dbReference type="UniProtKB" id="P68032"/>
    </source>
</evidence>
<evidence type="ECO:0000250" key="4">
    <source>
        <dbReference type="UniProtKB" id="P68033"/>
    </source>
</evidence>
<evidence type="ECO:0000250" key="5">
    <source>
        <dbReference type="UniProtKB" id="P68135"/>
    </source>
</evidence>
<evidence type="ECO:0000250" key="6">
    <source>
        <dbReference type="UniProtKB" id="P68137"/>
    </source>
</evidence>
<evidence type="ECO:0000269" key="7">
    <source>
    </source>
</evidence>
<evidence type="ECO:0000305" key="8"/>
<feature type="initiator methionine" description="Removed">
    <location>
        <position position="1"/>
    </location>
</feature>
<feature type="chain" id="PRO_0000443004" description="Actin, alpha cardiac muscle, intermediate form" evidence="1">
    <location>
        <begin position="2"/>
        <end position="377"/>
    </location>
</feature>
<feature type="chain" id="PRO_0000000827" description="Actin, alpha cardiac muscle" evidence="5">
    <location>
        <begin position="3"/>
        <end position="377"/>
    </location>
</feature>
<feature type="modified residue" description="N-acetylcysteine; in intermediate form" evidence="1">
    <location>
        <position position="2"/>
    </location>
</feature>
<feature type="modified residue" description="N-acetylaspartate; in Actin, alpha cardiac muscle" evidence="5">
    <location>
        <position position="3"/>
    </location>
</feature>
<feature type="modified residue" description="Methionine (R)-sulfoxide" evidence="4">
    <location>
        <position position="46"/>
    </location>
</feature>
<feature type="modified residue" description="Methionine (R)-sulfoxide" evidence="4">
    <location>
        <position position="49"/>
    </location>
</feature>
<feature type="modified residue" description="Tele-methylhistidine" evidence="2">
    <location>
        <position position="75"/>
    </location>
</feature>
<feature type="modified residue" description="N6-methyllysine" evidence="3">
    <location>
        <position position="86"/>
    </location>
</feature>
<reference key="1">
    <citation type="journal article" date="1996" name="J. Mol. Biol.">
        <title>Isolation, characterization and evolution of nine pufferfish (Fugu rubripes) actin genes.</title>
        <authorList>
            <person name="Venkatesh B."/>
            <person name="Tay B.H."/>
            <person name="Elgar G."/>
            <person name="Brenner S."/>
        </authorList>
    </citation>
    <scope>NUCLEOTIDE SEQUENCE [GENOMIC DNA]</scope>
    <scope>TISSUE SPECIFICITY</scope>
</reference>
<proteinExistence type="evidence at transcript level"/>
<sequence length="377" mass="41975">MCDDDETTALVCDNGSGLVKAGFAGDDAPRAVFPSIVGRPRHQGVMVGMGQKDSYVGDEAQSKRGILTLKYPIEHGIITNWDDMEKIWHHTFYNELRVAPEEHPTLLTEAPLNPKANREKMTQIMFETFNVPAMYVAIQAVLSLYASGRTTGIVLDSGDGVTHNVPIYEGYALPHAIMRLDLAGRDLTDYLMKILTERGYSFVTTAEREIVRDIKEKLCYVALDFENEMATAASSSSLEKSYELPDGQVITIGNERFRCPETLFQPSFIGMESAGIHETAYNSIMKCDIDIRKDLYANNVLSGGTTMYPGIADRMQKEITALAPSTMKIKIIAPPERKYSVWIGGSILASLSTFQQMWISKQEYDEAGPSIVHRKCF</sequence>
<name>ACTC_TAKRU</name>
<accession>P53480</accession>